<organism>
    <name type="scientific">Escherichia coli (strain K12)</name>
    <dbReference type="NCBI Taxonomy" id="83333"/>
    <lineage>
        <taxon>Bacteria</taxon>
        <taxon>Pseudomonadati</taxon>
        <taxon>Pseudomonadota</taxon>
        <taxon>Gammaproteobacteria</taxon>
        <taxon>Enterobacterales</taxon>
        <taxon>Enterobacteriaceae</taxon>
        <taxon>Escherichia</taxon>
    </lineage>
</organism>
<dbReference type="EMBL" id="U17902">
    <property type="protein sequence ID" value="AAA60332.1"/>
    <property type="molecule type" value="Genomic_DNA"/>
</dbReference>
<dbReference type="EMBL" id="U00096">
    <property type="protein sequence ID" value="AAC75280.1"/>
    <property type="molecule type" value="Genomic_DNA"/>
</dbReference>
<dbReference type="EMBL" id="AP009048">
    <property type="protein sequence ID" value="BAA16016.1"/>
    <property type="molecule type" value="Genomic_DNA"/>
</dbReference>
<dbReference type="EMBL" id="L13078">
    <property type="protein sequence ID" value="AAA23450.1"/>
    <property type="status" value="ALT_FRAME"/>
    <property type="molecule type" value="Genomic_DNA"/>
</dbReference>
<dbReference type="PIR" id="B64992">
    <property type="entry name" value="B64992"/>
</dbReference>
<dbReference type="RefSeq" id="NP_416724.1">
    <property type="nucleotide sequence ID" value="NC_000913.3"/>
</dbReference>
<dbReference type="RefSeq" id="WP_000125282.1">
    <property type="nucleotide sequence ID" value="NZ_LN832404.1"/>
</dbReference>
<dbReference type="SMR" id="Q06065"/>
<dbReference type="BioGRID" id="4261974">
    <property type="interactions" value="94"/>
</dbReference>
<dbReference type="DIP" id="DIP-9190N"/>
<dbReference type="FunCoup" id="Q06065">
    <property type="interactions" value="415"/>
</dbReference>
<dbReference type="IntAct" id="Q06065">
    <property type="interactions" value="10"/>
</dbReference>
<dbReference type="STRING" id="511145.b2220"/>
<dbReference type="iPTMnet" id="Q06065"/>
<dbReference type="jPOST" id="Q06065"/>
<dbReference type="PaxDb" id="511145-b2220"/>
<dbReference type="EnsemblBacteria" id="AAC75280">
    <property type="protein sequence ID" value="AAC75280"/>
    <property type="gene ID" value="b2220"/>
</dbReference>
<dbReference type="GeneID" id="947444"/>
<dbReference type="KEGG" id="ecj:JW2214"/>
<dbReference type="KEGG" id="eco:b2220"/>
<dbReference type="KEGG" id="ecoc:C3026_12410"/>
<dbReference type="PATRIC" id="fig|1411691.4.peg.15"/>
<dbReference type="EchoBASE" id="EB1619"/>
<dbReference type="eggNOG" id="COG2204">
    <property type="taxonomic scope" value="Bacteria"/>
</dbReference>
<dbReference type="HOGENOM" id="CLU_000445_0_5_6"/>
<dbReference type="InParanoid" id="Q06065"/>
<dbReference type="OMA" id="DAVFVMM"/>
<dbReference type="OrthoDB" id="9804019at2"/>
<dbReference type="PhylomeDB" id="Q06065"/>
<dbReference type="BioCyc" id="EcoCyc:ATOC-MONOMER"/>
<dbReference type="PRO" id="PR:Q06065"/>
<dbReference type="Proteomes" id="UP000000625">
    <property type="component" value="Chromosome"/>
</dbReference>
<dbReference type="GO" id="GO:0005737">
    <property type="term" value="C:cytoplasm"/>
    <property type="evidence" value="ECO:0007669"/>
    <property type="project" value="UniProtKB-SubCell"/>
</dbReference>
<dbReference type="GO" id="GO:0032993">
    <property type="term" value="C:protein-DNA complex"/>
    <property type="evidence" value="ECO:0000318"/>
    <property type="project" value="GO_Central"/>
</dbReference>
<dbReference type="GO" id="GO:0005524">
    <property type="term" value="F:ATP binding"/>
    <property type="evidence" value="ECO:0007669"/>
    <property type="project" value="UniProtKB-KW"/>
</dbReference>
<dbReference type="GO" id="GO:0016887">
    <property type="term" value="F:ATP hydrolysis activity"/>
    <property type="evidence" value="ECO:0007669"/>
    <property type="project" value="InterPro"/>
</dbReference>
<dbReference type="GO" id="GO:0000987">
    <property type="term" value="F:cis-regulatory region sequence-specific DNA binding"/>
    <property type="evidence" value="ECO:0000318"/>
    <property type="project" value="GO_Central"/>
</dbReference>
<dbReference type="GO" id="GO:0001216">
    <property type="term" value="F:DNA-binding transcription activator activity"/>
    <property type="evidence" value="ECO:0000318"/>
    <property type="project" value="GO_Central"/>
</dbReference>
<dbReference type="GO" id="GO:0003700">
    <property type="term" value="F:DNA-binding transcription factor activity"/>
    <property type="evidence" value="ECO:0000314"/>
    <property type="project" value="EcoCyc"/>
</dbReference>
<dbReference type="GO" id="GO:0000160">
    <property type="term" value="P:phosphorelay signal transduction system"/>
    <property type="evidence" value="ECO:0007669"/>
    <property type="project" value="UniProtKB-KW"/>
</dbReference>
<dbReference type="GO" id="GO:0045893">
    <property type="term" value="P:positive regulation of DNA-templated transcription"/>
    <property type="evidence" value="ECO:0000314"/>
    <property type="project" value="EcoCyc"/>
</dbReference>
<dbReference type="CDD" id="cd00009">
    <property type="entry name" value="AAA"/>
    <property type="match status" value="1"/>
</dbReference>
<dbReference type="CDD" id="cd17536">
    <property type="entry name" value="REC_YesN-like"/>
    <property type="match status" value="1"/>
</dbReference>
<dbReference type="FunFam" id="1.10.8.60:FF:000014">
    <property type="entry name" value="DNA-binding transcriptional regulator NtrC"/>
    <property type="match status" value="1"/>
</dbReference>
<dbReference type="FunFam" id="3.40.50.2300:FF:000018">
    <property type="entry name" value="DNA-binding transcriptional regulator NtrC"/>
    <property type="match status" value="1"/>
</dbReference>
<dbReference type="FunFam" id="3.40.50.300:FF:000006">
    <property type="entry name" value="DNA-binding transcriptional regulator NtrC"/>
    <property type="match status" value="1"/>
</dbReference>
<dbReference type="Gene3D" id="1.10.8.60">
    <property type="match status" value="1"/>
</dbReference>
<dbReference type="Gene3D" id="3.40.50.2300">
    <property type="match status" value="1"/>
</dbReference>
<dbReference type="Gene3D" id="1.10.10.60">
    <property type="entry name" value="Homeodomain-like"/>
    <property type="match status" value="1"/>
</dbReference>
<dbReference type="Gene3D" id="3.40.50.300">
    <property type="entry name" value="P-loop containing nucleotide triphosphate hydrolases"/>
    <property type="match status" value="1"/>
</dbReference>
<dbReference type="InterPro" id="IPR003593">
    <property type="entry name" value="AAA+_ATPase"/>
</dbReference>
<dbReference type="InterPro" id="IPR011006">
    <property type="entry name" value="CheY-like_superfamily"/>
</dbReference>
<dbReference type="InterPro" id="IPR009057">
    <property type="entry name" value="Homeodomain-like_sf"/>
</dbReference>
<dbReference type="InterPro" id="IPR002197">
    <property type="entry name" value="HTH_Fis"/>
</dbReference>
<dbReference type="InterPro" id="IPR027417">
    <property type="entry name" value="P-loop_NTPase"/>
</dbReference>
<dbReference type="InterPro" id="IPR001789">
    <property type="entry name" value="Sig_transdc_resp-reg_receiver"/>
</dbReference>
<dbReference type="InterPro" id="IPR002078">
    <property type="entry name" value="Sigma_54_int"/>
</dbReference>
<dbReference type="InterPro" id="IPR025662">
    <property type="entry name" value="Sigma_54_int_dom_ATP-bd_1"/>
</dbReference>
<dbReference type="InterPro" id="IPR025943">
    <property type="entry name" value="Sigma_54_int_dom_ATP-bd_2"/>
</dbReference>
<dbReference type="InterPro" id="IPR025944">
    <property type="entry name" value="Sigma_54_int_dom_CS"/>
</dbReference>
<dbReference type="NCBIfam" id="NF008469">
    <property type="entry name" value="PRK11361.1"/>
    <property type="match status" value="1"/>
</dbReference>
<dbReference type="PANTHER" id="PTHR32071:SF117">
    <property type="entry name" value="PTS-DEPENDENT DIHYDROXYACETONE KINASE OPERON REGULATORY PROTEIN-RELATED"/>
    <property type="match status" value="1"/>
</dbReference>
<dbReference type="PANTHER" id="PTHR32071">
    <property type="entry name" value="TRANSCRIPTIONAL REGULATORY PROTEIN"/>
    <property type="match status" value="1"/>
</dbReference>
<dbReference type="Pfam" id="PF02954">
    <property type="entry name" value="HTH_8"/>
    <property type="match status" value="1"/>
</dbReference>
<dbReference type="Pfam" id="PF00072">
    <property type="entry name" value="Response_reg"/>
    <property type="match status" value="1"/>
</dbReference>
<dbReference type="Pfam" id="PF00158">
    <property type="entry name" value="Sigma54_activat"/>
    <property type="match status" value="1"/>
</dbReference>
<dbReference type="PRINTS" id="PR01590">
    <property type="entry name" value="HTHFIS"/>
</dbReference>
<dbReference type="SMART" id="SM00382">
    <property type="entry name" value="AAA"/>
    <property type="match status" value="1"/>
</dbReference>
<dbReference type="SMART" id="SM00448">
    <property type="entry name" value="REC"/>
    <property type="match status" value="1"/>
</dbReference>
<dbReference type="SUPFAM" id="SSF52172">
    <property type="entry name" value="CheY-like"/>
    <property type="match status" value="1"/>
</dbReference>
<dbReference type="SUPFAM" id="SSF46689">
    <property type="entry name" value="Homeodomain-like"/>
    <property type="match status" value="1"/>
</dbReference>
<dbReference type="SUPFAM" id="SSF52540">
    <property type="entry name" value="P-loop containing nucleoside triphosphate hydrolases"/>
    <property type="match status" value="1"/>
</dbReference>
<dbReference type="PROSITE" id="PS50110">
    <property type="entry name" value="RESPONSE_REGULATORY"/>
    <property type="match status" value="1"/>
</dbReference>
<dbReference type="PROSITE" id="PS00675">
    <property type="entry name" value="SIGMA54_INTERACT_1"/>
    <property type="match status" value="1"/>
</dbReference>
<dbReference type="PROSITE" id="PS00676">
    <property type="entry name" value="SIGMA54_INTERACT_2"/>
    <property type="match status" value="1"/>
</dbReference>
<dbReference type="PROSITE" id="PS00688">
    <property type="entry name" value="SIGMA54_INTERACT_3"/>
    <property type="match status" value="1"/>
</dbReference>
<dbReference type="PROSITE" id="PS50045">
    <property type="entry name" value="SIGMA54_INTERACT_4"/>
    <property type="match status" value="1"/>
</dbReference>
<evidence type="ECO:0000250" key="1"/>
<evidence type="ECO:0000255" key="2">
    <source>
        <dbReference type="PROSITE-ProRule" id="PRU00169"/>
    </source>
</evidence>
<evidence type="ECO:0000255" key="3">
    <source>
        <dbReference type="PROSITE-ProRule" id="PRU00193"/>
    </source>
</evidence>
<evidence type="ECO:0000269" key="4">
    <source>
    </source>
</evidence>
<evidence type="ECO:0000269" key="5">
    <source>
    </source>
</evidence>
<evidence type="ECO:0000269" key="6">
    <source>
    </source>
</evidence>
<evidence type="ECO:0000269" key="7">
    <source>
    </source>
</evidence>
<evidence type="ECO:0000269" key="8">
    <source>
    </source>
</evidence>
<evidence type="ECO:0000269" key="9">
    <source>
    </source>
</evidence>
<evidence type="ECO:0000269" key="10">
    <source>
    </source>
</evidence>
<evidence type="ECO:0000303" key="11">
    <source>
    </source>
</evidence>
<evidence type="ECO:0000305" key="12"/>
<evidence type="ECO:0000305" key="13">
    <source>
    </source>
</evidence>
<reference key="1">
    <citation type="submission" date="1994-11" db="EMBL/GenBank/DDBJ databases">
        <authorList>
            <person name="Chen C."/>
            <person name="Cooke P.A."/>
            <person name="Rudd K.E."/>
            <person name="Shanley M.S."/>
        </authorList>
    </citation>
    <scope>NUCLEOTIDE SEQUENCE [GENOMIC DNA]</scope>
    <source>
        <strain>K12</strain>
    </source>
</reference>
<reference key="2">
    <citation type="journal article" date="1996" name="DNA Res.">
        <title>A 460-kb DNA sequence of the Escherichia coli K-12 genome corresponding to the 40.1-50.0 min region on the linkage map.</title>
        <authorList>
            <person name="Itoh T."/>
            <person name="Aiba H."/>
            <person name="Baba T."/>
            <person name="Fujita K."/>
            <person name="Hayashi K."/>
            <person name="Inada T."/>
            <person name="Isono K."/>
            <person name="Kasai H."/>
            <person name="Kimura S."/>
            <person name="Kitakawa M."/>
            <person name="Kitagawa M."/>
            <person name="Makino K."/>
            <person name="Miki T."/>
            <person name="Mizobuchi K."/>
            <person name="Mori H."/>
            <person name="Mori T."/>
            <person name="Motomura K."/>
            <person name="Nakade S."/>
            <person name="Nakamura Y."/>
            <person name="Nashimoto H."/>
            <person name="Nishio Y."/>
            <person name="Oshima T."/>
            <person name="Saito N."/>
            <person name="Sampei G."/>
            <person name="Seki Y."/>
            <person name="Sivasundaram S."/>
            <person name="Tagami H."/>
            <person name="Takeda J."/>
            <person name="Takemoto K."/>
            <person name="Wada C."/>
            <person name="Yamamoto Y."/>
            <person name="Horiuchi T."/>
        </authorList>
    </citation>
    <scope>NUCLEOTIDE SEQUENCE [LARGE SCALE GENOMIC DNA]</scope>
    <source>
        <strain>K12 / W3110 / ATCC 27325 / DSM 5911</strain>
    </source>
</reference>
<reference key="3">
    <citation type="journal article" date="1997" name="Science">
        <title>The complete genome sequence of Escherichia coli K-12.</title>
        <authorList>
            <person name="Blattner F.R."/>
            <person name="Plunkett G. III"/>
            <person name="Bloch C.A."/>
            <person name="Perna N.T."/>
            <person name="Burland V."/>
            <person name="Riley M."/>
            <person name="Collado-Vides J."/>
            <person name="Glasner J.D."/>
            <person name="Rode C.K."/>
            <person name="Mayhew G.F."/>
            <person name="Gregor J."/>
            <person name="Davis N.W."/>
            <person name="Kirkpatrick H.A."/>
            <person name="Goeden M.A."/>
            <person name="Rose D.J."/>
            <person name="Mau B."/>
            <person name="Shao Y."/>
        </authorList>
    </citation>
    <scope>NUCLEOTIDE SEQUENCE [LARGE SCALE GENOMIC DNA]</scope>
    <source>
        <strain>K12 / MG1655 / ATCC 47076</strain>
    </source>
</reference>
<reference key="4">
    <citation type="journal article" date="2006" name="Mol. Syst. Biol.">
        <title>Highly accurate genome sequences of Escherichia coli K-12 strains MG1655 and W3110.</title>
        <authorList>
            <person name="Hayashi K."/>
            <person name="Morooka N."/>
            <person name="Yamamoto Y."/>
            <person name="Fujita K."/>
            <person name="Isono K."/>
            <person name="Choi S."/>
            <person name="Ohtsubo E."/>
            <person name="Baba T."/>
            <person name="Wanner B.L."/>
            <person name="Mori H."/>
            <person name="Horiuchi T."/>
        </authorList>
    </citation>
    <scope>NUCLEOTIDE SEQUENCE [LARGE SCALE GENOMIC DNA]</scope>
    <source>
        <strain>K12 / W3110 / ATCC 27325 / DSM 5911</strain>
    </source>
</reference>
<reference key="5">
    <citation type="journal article" date="1993" name="Proc. Natl. Acad. Sci. U.S.A.">
        <title>Identification, cloning, and nucleotide sequencing of the ornithine decarboxylase antizyme gene of Escherichia coli.</title>
        <authorList>
            <person name="Canellakis E.S."/>
            <person name="Paterakis A.A."/>
            <person name="Huang S.-C."/>
            <person name="Panagiotidis C.A."/>
            <person name="Kyriakidis D.A."/>
        </authorList>
    </citation>
    <scope>NUCLEOTIDE SEQUENCE [GENOMIC DNA] OF 85-461</scope>
    <scope>FUNCTION</scope>
    <source>
        <strain>K12</strain>
    </source>
</reference>
<reference key="6">
    <citation type="journal article" date="1987" name="J. Bacteriol.">
        <title>Regulation of the ato operon by the atoC gene in Escherichia coli.</title>
        <authorList>
            <person name="Jenkins L.S."/>
            <person name="Nunn W.D."/>
        </authorList>
    </citation>
    <scope>FUNCTION</scope>
    <source>
        <strain>K12</strain>
    </source>
</reference>
<reference key="7">
    <citation type="journal article" date="2005" name="Biochim. Biophys. Acta">
        <title>Phosphorylation activity of the response regulator of the two-component signal transduction system AtoS-AtoC in E. coli.</title>
        <authorList>
            <person name="Lioliou E.E."/>
            <person name="Mimitou E.P."/>
            <person name="Grigoroudis A.I."/>
            <person name="Panagiotidis C.H."/>
            <person name="Panagiotidis C.A."/>
            <person name="Kyriakidis D.A."/>
        </authorList>
    </citation>
    <scope>FUNCTION</scope>
    <scope>SUBCELLULAR LOCATION</scope>
    <scope>PHOSPHORYLATION AT ASP-55 AND HIS-73</scope>
    <scope>MUTAGENESIS OF ASP-55 AND HIS-73</scope>
</reference>
<reference key="8">
    <citation type="journal article" date="2006" name="Biochim. Biophys. Acta">
        <title>Involvement of the AtoS-AtoC signal transduction system in poly-(R)-3-hydroxybutyrate biosynthesis in Escherichia coli.</title>
        <authorList>
            <person name="Theodorou M.C."/>
            <person name="Panagiotidis C.A."/>
            <person name="Panagiotidis C.H."/>
            <person name="Pantazaki A.A."/>
            <person name="Kyriakidis D.A."/>
        </authorList>
    </citation>
    <scope>FUNCTION</scope>
    <scope>MUTAGENESIS OF ASP-55 AND HIS-73</scope>
    <source>
        <strain>K12</strain>
    </source>
</reference>
<reference key="9">
    <citation type="journal article" date="2007" name="Biochim. Biophys. Acta">
        <title>Spermidine triggering effect to the signal transduction through the AtoS-AtoC/Az two-component system in Escherichia coli.</title>
        <authorList>
            <person name="Theodorou M.C."/>
            <person name="Theodorou E.C."/>
            <person name="Panagiotidis C.A."/>
            <person name="Kyriakidis D.A."/>
        </authorList>
    </citation>
    <scope>FUNCTION</scope>
</reference>
<reference key="10">
    <citation type="journal article" date="2007" name="J. Bacteriol.">
        <title>Interactions of the antizyme AtoC with regulatory elements of the Escherichia coli atoDAEB operon.</title>
        <authorList>
            <person name="Matta M.K."/>
            <person name="Lioliou E.E."/>
            <person name="Panagiotidis C.H."/>
            <person name="Kyriakidis D.A."/>
            <person name="Panagiotidis C.A."/>
        </authorList>
    </citation>
    <scope>FUNCTION</scope>
    <scope>DNA-BINDING</scope>
</reference>
<reference key="11">
    <citation type="journal article" date="2012" name="Amino Acids">
        <title>Involvement of AtoSC two-component system in Escherichia coli flagellar regulon.</title>
        <authorList>
            <person name="Theodorou M.C."/>
            <person name="Theodorou E.C."/>
            <person name="Kyriakidis D.A."/>
        </authorList>
    </citation>
    <scope>FUNCTION</scope>
    <scope>DISRUPTION PHENOTYPE</scope>
</reference>
<proteinExistence type="evidence at protein level"/>
<sequence>MTAINRILIVDDEDNVRRMLSTAFALQGFETHCANNGRTALHLFADIHPDVVLMDIRMPEMDGIKALKEMRSHETRTPVILMTAYAEVETAVEALRCGAFDYVIKPFDLDELNLIVQRALQLQSMKKEIRHLHQALSTSWQWGHILTNSPAMMDICKDTAKIALSQASVLISGESGTGKELIARAIHYNSRRAKGPFIKVNCAALPESLLESELFGHEKGAFTGAQTLRQGLFERANEGTLLLDEIGEMPLVLQAKLLRILQEREFERIGGHQTIKVDIRIIAATNRDLQAMVKEGTFREDLFYRLNVIHLILPPLRDRREDISLLANHFLQKFSSENQRDIIDIDPMAMSLLTAWSWPGNIRELSNVIERAVVMNSGPIIFSEDLPPQIRQPVCNAGEVKTAPVGERNLKEEIKRVEKRIIMEVLEQQEGNRTRTALMLGISRRALMYKLQEYGIDPADV</sequence>
<comment type="function">
    <text evidence="4 5 6 7 8 9 10">Member of the two-component regulatory system AtoS/AtoC. In the presence of acetoacetate, AtoS/AtoC stimulates the expression of the atoDAEB operon, leading to short chain fatty acid catabolism and activation of the poly-(R)-3-hydroxybutyrate (cPHB) biosynthetic pathway. Also induces the operon in response to spermidine (PubMed:16153782, PubMed:16564134, PubMed:17475408, PubMed:2883171). Involved in the regulation of motility and chemotaxis, via transcriptional induction of the flagellar regulon (PubMed:22083893). AtoC acts by binding directly to the promoter region of the target genes (PubMed:17616594). In addition to its role as a transcriptional regulator, functions as a post-translational regulator that inhibits polyamine biosynthesis via regulation of ornithine decarboxylase (ODC) (PubMed:8346225).</text>
</comment>
<comment type="subcellular location">
    <subcellularLocation>
        <location evidence="4">Cytoplasm</location>
    </subcellularLocation>
    <text evidence="4">Membrane-associated in the presence of AtoS.</text>
</comment>
<comment type="PTM">
    <text evidence="4">Phosphorylated by AtoS (PubMed:16153782). Contains two phosphorylation sites, which are both involved in the transduction of the acetoacetate signal (PubMed:16153782). Asp-55 is probably the primary phosphorylation site, but either both residues can be phosphorylated independently by AtoS or the phosphate group can be transferred between them (PubMed:16153782).</text>
</comment>
<comment type="PTM">
    <text evidence="13">The N-terminus is blocked.</text>
</comment>
<comment type="disruption phenotype">
    <text evidence="8">Deletion of the atoSC locus renders cells not motile or responsive against any chemoattractant or repellent independently of the atoSC inducer's presence.</text>
</comment>
<comment type="sequence caution" evidence="12">
    <conflict type="frameshift">
        <sequence resource="EMBL-CDS" id="AAA23450"/>
    </conflict>
</comment>
<gene>
    <name type="primary">atoC</name>
    <name evidence="11" type="synonym">az</name>
    <name type="ordered locus">b2220</name>
    <name type="ordered locus">JW2214</name>
</gene>
<accession>Q06065</accession>
<name>ATOC_ECOLI</name>
<keyword id="KW-0010">Activator</keyword>
<keyword id="KW-0067">ATP-binding</keyword>
<keyword id="KW-0963">Cytoplasm</keyword>
<keyword id="KW-0238">DNA-binding</keyword>
<keyword id="KW-0547">Nucleotide-binding</keyword>
<keyword id="KW-0597">Phosphoprotein</keyword>
<keyword id="KW-1185">Reference proteome</keyword>
<keyword id="KW-0804">Transcription</keyword>
<keyword id="KW-0805">Transcription regulation</keyword>
<keyword id="KW-0902">Two-component regulatory system</keyword>
<protein>
    <recommendedName>
        <fullName evidence="12">Regulatory protein AtoC</fullName>
    </recommendedName>
    <alternativeName>
        <fullName evidence="12">Acetoacetate metabolism regulatory protein</fullName>
    </alternativeName>
    <alternativeName>
        <fullName evidence="12">DNA-binding transcriptional regulator AtoC</fullName>
    </alternativeName>
    <alternativeName>
        <fullName evidence="11">Ornithine decarboxylase antizyme</fullName>
    </alternativeName>
</protein>
<feature type="chain" id="PRO_0000081020" description="Regulatory protein AtoC">
    <location>
        <begin position="1"/>
        <end position="461"/>
    </location>
</feature>
<feature type="domain" description="Response regulatory" evidence="2">
    <location>
        <begin position="6"/>
        <end position="120"/>
    </location>
</feature>
<feature type="domain" description="Sigma-54 factor interaction" evidence="3">
    <location>
        <begin position="145"/>
        <end position="374"/>
    </location>
</feature>
<feature type="DNA-binding region" description="H-T-H motif" evidence="1">
    <location>
        <begin position="433"/>
        <end position="452"/>
    </location>
</feature>
<feature type="binding site" evidence="3">
    <location>
        <begin position="173"/>
        <end position="180"/>
    </location>
    <ligand>
        <name>ATP</name>
        <dbReference type="ChEBI" id="CHEBI:30616"/>
    </ligand>
</feature>
<feature type="binding site" evidence="3">
    <location>
        <begin position="236"/>
        <end position="245"/>
    </location>
    <ligand>
        <name>ATP</name>
        <dbReference type="ChEBI" id="CHEBI:30616"/>
    </ligand>
</feature>
<feature type="modified residue" description="4-aspartylphosphate" evidence="2 4">
    <location>
        <position position="55"/>
    </location>
</feature>
<feature type="modified residue" description="Phosphohistidine" evidence="4">
    <location>
        <position position="73"/>
    </location>
</feature>
<feature type="mutagenesis site" description="Decreases phosphorylation. Significant decrease in ability to respond to acetoacetate induction. 40% decrease in cPHB accumulation. Cannot respond to acetoacetate induction; when associated with L-73." evidence="4 5">
    <original>D</original>
    <variation>G</variation>
    <location>
        <position position="55"/>
    </location>
</feature>
<feature type="mutagenesis site" description="Decreases phosphorylation. Decrease in ability to respond to acetoacetate induction. 70% decrease in cPHB accumulation. Cannot respond to acetoacetate induction; when associated with G-55." evidence="4 5">
    <original>H</original>
    <variation>L</variation>
    <location>
        <position position="73"/>
    </location>
</feature>
<feature type="sequence conflict" description="In Ref. 5; AAA23450." evidence="12" ref="5">
    <original>A</original>
    <variation>R</variation>
    <location>
        <position position="99"/>
    </location>
</feature>